<comment type="similarity">
    <text evidence="1">Belongs to the bacterial ribosomal protein bL28 family.</text>
</comment>
<gene>
    <name evidence="1" type="primary">rpmB</name>
    <name type="ordered locus">RBAM_015650</name>
</gene>
<accession>A7Z4K2</accession>
<evidence type="ECO:0000255" key="1">
    <source>
        <dbReference type="HAMAP-Rule" id="MF_00373"/>
    </source>
</evidence>
<evidence type="ECO:0000305" key="2"/>
<sequence>MARKCFITGKKTKAGNNRSHAMNASKRTWGANLQKVRILVDGKPKKVYVSARALKSGKVERV</sequence>
<reference key="1">
    <citation type="journal article" date="2007" name="Nat. Biotechnol.">
        <title>Comparative analysis of the complete genome sequence of the plant growth-promoting bacterium Bacillus amyloliquefaciens FZB42.</title>
        <authorList>
            <person name="Chen X.H."/>
            <person name="Koumoutsi A."/>
            <person name="Scholz R."/>
            <person name="Eisenreich A."/>
            <person name="Schneider K."/>
            <person name="Heinemeyer I."/>
            <person name="Morgenstern B."/>
            <person name="Voss B."/>
            <person name="Hess W.R."/>
            <person name="Reva O."/>
            <person name="Junge H."/>
            <person name="Voigt B."/>
            <person name="Jungblut P.R."/>
            <person name="Vater J."/>
            <person name="Suessmuth R."/>
            <person name="Liesegang H."/>
            <person name="Strittmatter A."/>
            <person name="Gottschalk G."/>
            <person name="Borriss R."/>
        </authorList>
    </citation>
    <scope>NUCLEOTIDE SEQUENCE [LARGE SCALE GENOMIC DNA]</scope>
    <source>
        <strain>DSM 23117 / BGSC 10A6 / LMG 26770 / FZB42</strain>
    </source>
</reference>
<name>RL28_BACVZ</name>
<protein>
    <recommendedName>
        <fullName evidence="1">Large ribosomal subunit protein bL28</fullName>
    </recommendedName>
    <alternativeName>
        <fullName evidence="2">50S ribosomal protein L28</fullName>
    </alternativeName>
</protein>
<proteinExistence type="inferred from homology"/>
<dbReference type="EMBL" id="CP000560">
    <property type="protein sequence ID" value="ABS73928.1"/>
    <property type="molecule type" value="Genomic_DNA"/>
</dbReference>
<dbReference type="RefSeq" id="WP_003154328.1">
    <property type="nucleotide sequence ID" value="NC_009725.2"/>
</dbReference>
<dbReference type="SMR" id="A7Z4K2"/>
<dbReference type="GeneID" id="93080698"/>
<dbReference type="KEGG" id="bay:RBAM_015650"/>
<dbReference type="HOGENOM" id="CLU_064548_7_1_9"/>
<dbReference type="Proteomes" id="UP000001120">
    <property type="component" value="Chromosome"/>
</dbReference>
<dbReference type="GO" id="GO:1990904">
    <property type="term" value="C:ribonucleoprotein complex"/>
    <property type="evidence" value="ECO:0007669"/>
    <property type="project" value="UniProtKB-KW"/>
</dbReference>
<dbReference type="GO" id="GO:0005840">
    <property type="term" value="C:ribosome"/>
    <property type="evidence" value="ECO:0007669"/>
    <property type="project" value="UniProtKB-KW"/>
</dbReference>
<dbReference type="GO" id="GO:0003735">
    <property type="term" value="F:structural constituent of ribosome"/>
    <property type="evidence" value="ECO:0007669"/>
    <property type="project" value="InterPro"/>
</dbReference>
<dbReference type="GO" id="GO:0006412">
    <property type="term" value="P:translation"/>
    <property type="evidence" value="ECO:0007669"/>
    <property type="project" value="UniProtKB-UniRule"/>
</dbReference>
<dbReference type="Gene3D" id="2.30.170.40">
    <property type="entry name" value="Ribosomal protein L28/L24"/>
    <property type="match status" value="1"/>
</dbReference>
<dbReference type="HAMAP" id="MF_00373">
    <property type="entry name" value="Ribosomal_bL28"/>
    <property type="match status" value="1"/>
</dbReference>
<dbReference type="InterPro" id="IPR050096">
    <property type="entry name" value="Bacterial_rp_bL28"/>
</dbReference>
<dbReference type="InterPro" id="IPR026569">
    <property type="entry name" value="Ribosomal_bL28"/>
</dbReference>
<dbReference type="InterPro" id="IPR034704">
    <property type="entry name" value="Ribosomal_bL28/bL31-like_sf"/>
</dbReference>
<dbReference type="InterPro" id="IPR001383">
    <property type="entry name" value="Ribosomal_bL28_bact-type"/>
</dbReference>
<dbReference type="InterPro" id="IPR037147">
    <property type="entry name" value="Ribosomal_bL28_sf"/>
</dbReference>
<dbReference type="NCBIfam" id="TIGR00009">
    <property type="entry name" value="L28"/>
    <property type="match status" value="1"/>
</dbReference>
<dbReference type="PANTHER" id="PTHR39080">
    <property type="entry name" value="50S RIBOSOMAL PROTEIN L28"/>
    <property type="match status" value="1"/>
</dbReference>
<dbReference type="PANTHER" id="PTHR39080:SF1">
    <property type="entry name" value="LARGE RIBOSOMAL SUBUNIT PROTEIN BL28A"/>
    <property type="match status" value="1"/>
</dbReference>
<dbReference type="Pfam" id="PF00830">
    <property type="entry name" value="Ribosomal_L28"/>
    <property type="match status" value="1"/>
</dbReference>
<dbReference type="SUPFAM" id="SSF143800">
    <property type="entry name" value="L28p-like"/>
    <property type="match status" value="1"/>
</dbReference>
<feature type="chain" id="PRO_1000007170" description="Large ribosomal subunit protein bL28">
    <location>
        <begin position="1"/>
        <end position="62"/>
    </location>
</feature>
<organism>
    <name type="scientific">Bacillus velezensis (strain DSM 23117 / BGSC 10A6 / LMG 26770 / FZB42)</name>
    <name type="common">Bacillus amyloliquefaciens subsp. plantarum</name>
    <dbReference type="NCBI Taxonomy" id="326423"/>
    <lineage>
        <taxon>Bacteria</taxon>
        <taxon>Bacillati</taxon>
        <taxon>Bacillota</taxon>
        <taxon>Bacilli</taxon>
        <taxon>Bacillales</taxon>
        <taxon>Bacillaceae</taxon>
        <taxon>Bacillus</taxon>
        <taxon>Bacillus amyloliquefaciens group</taxon>
    </lineage>
</organism>
<keyword id="KW-0687">Ribonucleoprotein</keyword>
<keyword id="KW-0689">Ribosomal protein</keyword>